<keyword id="KW-0997">Cell inner membrane</keyword>
<keyword id="KW-1003">Cell membrane</keyword>
<keyword id="KW-0460">Magnesium</keyword>
<keyword id="KW-0472">Membrane</keyword>
<keyword id="KW-0808">Transferase</keyword>
<keyword id="KW-0812">Transmembrane</keyword>
<keyword id="KW-1133">Transmembrane helix</keyword>
<keyword id="KW-0831">Ubiquinone biosynthesis</keyword>
<evidence type="ECO:0000255" key="1">
    <source>
        <dbReference type="HAMAP-Rule" id="MF_01635"/>
    </source>
</evidence>
<protein>
    <recommendedName>
        <fullName evidence="1">4-hydroxybenzoate octaprenyltransferase</fullName>
        <ecNumber evidence="1">2.5.1.39</ecNumber>
    </recommendedName>
    <alternativeName>
        <fullName evidence="1">4-HB polyprenyltransferase</fullName>
    </alternativeName>
</protein>
<accession>A3NDA6</accession>
<proteinExistence type="inferred from homology"/>
<reference key="1">
    <citation type="journal article" date="2010" name="Genome Biol. Evol.">
        <title>Continuing evolution of Burkholderia mallei through genome reduction and large-scale rearrangements.</title>
        <authorList>
            <person name="Losada L."/>
            <person name="Ronning C.M."/>
            <person name="DeShazer D."/>
            <person name="Woods D."/>
            <person name="Fedorova N."/>
            <person name="Kim H.S."/>
            <person name="Shabalina S.A."/>
            <person name="Pearson T.R."/>
            <person name="Brinkac L."/>
            <person name="Tan P."/>
            <person name="Nandi T."/>
            <person name="Crabtree J."/>
            <person name="Badger J."/>
            <person name="Beckstrom-Sternberg S."/>
            <person name="Saqib M."/>
            <person name="Schutzer S.E."/>
            <person name="Keim P."/>
            <person name="Nierman W.C."/>
        </authorList>
    </citation>
    <scope>NUCLEOTIDE SEQUENCE [LARGE SCALE GENOMIC DNA]</scope>
    <source>
        <strain>668</strain>
    </source>
</reference>
<dbReference type="EC" id="2.5.1.39" evidence="1"/>
<dbReference type="EMBL" id="CP000570">
    <property type="protein sequence ID" value="ABN82385.1"/>
    <property type="molecule type" value="Genomic_DNA"/>
</dbReference>
<dbReference type="RefSeq" id="WP_004522125.1">
    <property type="nucleotide sequence ID" value="NC_009074.1"/>
</dbReference>
<dbReference type="SMR" id="A3NDA6"/>
<dbReference type="KEGG" id="bpd:BURPS668_3316"/>
<dbReference type="HOGENOM" id="CLU_034879_1_0_4"/>
<dbReference type="UniPathway" id="UPA00232"/>
<dbReference type="GO" id="GO:0005886">
    <property type="term" value="C:plasma membrane"/>
    <property type="evidence" value="ECO:0007669"/>
    <property type="project" value="UniProtKB-SubCell"/>
</dbReference>
<dbReference type="GO" id="GO:0008412">
    <property type="term" value="F:4-hydroxybenzoate polyprenyltransferase activity"/>
    <property type="evidence" value="ECO:0007669"/>
    <property type="project" value="UniProtKB-UniRule"/>
</dbReference>
<dbReference type="GO" id="GO:0006744">
    <property type="term" value="P:ubiquinone biosynthetic process"/>
    <property type="evidence" value="ECO:0007669"/>
    <property type="project" value="UniProtKB-UniRule"/>
</dbReference>
<dbReference type="CDD" id="cd13959">
    <property type="entry name" value="PT_UbiA_COQ2"/>
    <property type="match status" value="1"/>
</dbReference>
<dbReference type="FunFam" id="1.10.357.140:FF:000002">
    <property type="entry name" value="4-hydroxybenzoate octaprenyltransferase"/>
    <property type="match status" value="1"/>
</dbReference>
<dbReference type="FunFam" id="1.20.120.1780:FF:000001">
    <property type="entry name" value="4-hydroxybenzoate octaprenyltransferase"/>
    <property type="match status" value="1"/>
</dbReference>
<dbReference type="Gene3D" id="1.10.357.140">
    <property type="entry name" value="UbiA prenyltransferase"/>
    <property type="match status" value="1"/>
</dbReference>
<dbReference type="Gene3D" id="1.20.120.1780">
    <property type="entry name" value="UbiA prenyltransferase"/>
    <property type="match status" value="1"/>
</dbReference>
<dbReference type="HAMAP" id="MF_01635">
    <property type="entry name" value="UbiA"/>
    <property type="match status" value="1"/>
</dbReference>
<dbReference type="InterPro" id="IPR006370">
    <property type="entry name" value="HB_polyprenyltransferase-like"/>
</dbReference>
<dbReference type="InterPro" id="IPR039653">
    <property type="entry name" value="Prenyltransferase"/>
</dbReference>
<dbReference type="InterPro" id="IPR000537">
    <property type="entry name" value="UbiA_prenyltransferase"/>
</dbReference>
<dbReference type="InterPro" id="IPR030470">
    <property type="entry name" value="UbiA_prenylTrfase_CS"/>
</dbReference>
<dbReference type="InterPro" id="IPR044878">
    <property type="entry name" value="UbiA_sf"/>
</dbReference>
<dbReference type="NCBIfam" id="TIGR01474">
    <property type="entry name" value="ubiA_proteo"/>
    <property type="match status" value="1"/>
</dbReference>
<dbReference type="PANTHER" id="PTHR11048:SF28">
    <property type="entry name" value="4-HYDROXYBENZOATE POLYPRENYLTRANSFERASE, MITOCHONDRIAL"/>
    <property type="match status" value="1"/>
</dbReference>
<dbReference type="PANTHER" id="PTHR11048">
    <property type="entry name" value="PRENYLTRANSFERASES"/>
    <property type="match status" value="1"/>
</dbReference>
<dbReference type="Pfam" id="PF01040">
    <property type="entry name" value="UbiA"/>
    <property type="match status" value="1"/>
</dbReference>
<dbReference type="PROSITE" id="PS00943">
    <property type="entry name" value="UBIA"/>
    <property type="match status" value="1"/>
</dbReference>
<comment type="function">
    <text evidence="1">Catalyzes the prenylation of para-hydroxybenzoate (PHB) with an all-trans polyprenyl group. Mediates the second step in the final reaction sequence of ubiquinone-8 (UQ-8) biosynthesis, which is the condensation of the polyisoprenoid side chain with PHB, generating the first membrane-bound Q intermediate 3-octaprenyl-4-hydroxybenzoate.</text>
</comment>
<comment type="catalytic activity">
    <reaction evidence="1">
        <text>all-trans-octaprenyl diphosphate + 4-hydroxybenzoate = 4-hydroxy-3-(all-trans-octaprenyl)benzoate + diphosphate</text>
        <dbReference type="Rhea" id="RHEA:27782"/>
        <dbReference type="ChEBI" id="CHEBI:1617"/>
        <dbReference type="ChEBI" id="CHEBI:17879"/>
        <dbReference type="ChEBI" id="CHEBI:33019"/>
        <dbReference type="ChEBI" id="CHEBI:57711"/>
        <dbReference type="EC" id="2.5.1.39"/>
    </reaction>
</comment>
<comment type="cofactor">
    <cofactor evidence="1">
        <name>Mg(2+)</name>
        <dbReference type="ChEBI" id="CHEBI:18420"/>
    </cofactor>
</comment>
<comment type="pathway">
    <text evidence="1">Cofactor biosynthesis; ubiquinone biosynthesis.</text>
</comment>
<comment type="subcellular location">
    <subcellularLocation>
        <location evidence="1">Cell inner membrane</location>
        <topology evidence="1">Multi-pass membrane protein</topology>
    </subcellularLocation>
</comment>
<comment type="similarity">
    <text evidence="1">Belongs to the UbiA prenyltransferase family.</text>
</comment>
<organism>
    <name type="scientific">Burkholderia pseudomallei (strain 668)</name>
    <dbReference type="NCBI Taxonomy" id="320373"/>
    <lineage>
        <taxon>Bacteria</taxon>
        <taxon>Pseudomonadati</taxon>
        <taxon>Pseudomonadota</taxon>
        <taxon>Betaproteobacteria</taxon>
        <taxon>Burkholderiales</taxon>
        <taxon>Burkholderiaceae</taxon>
        <taxon>Burkholderia</taxon>
        <taxon>pseudomallei group</taxon>
    </lineage>
</organism>
<name>UBIA_BURP6</name>
<gene>
    <name evidence="1" type="primary">ubiA</name>
    <name type="ordered locus">BURPS668_3316</name>
</gene>
<sequence>MLARFPLYLRLIRMDKPIGSLLLLWPTLNALWIASDGHPAPSLVAIFALGTLLMRSAGCAINDYADRDFDRHVKRTAERPLTSGKIRAWEAIAIAVGLALVSFLLILPLNGLTKELSVVAVFVAATYPFMKRFFAIPQAYLGIAFGFGIPMAFAAVQDTVPMIAWAMLAANVFWSVAYDTAYAMVDRDDDLKIGMRTSAITFGRHDVLAIMLCYAAMLGIYVWLGAALHFGWPYWAGWAAAAGCSIYHYTLIKDRERMACFAAFRHNNWLGGVLFAGIAAHYALAVR</sequence>
<feature type="chain" id="PRO_1000069812" description="4-hydroxybenzoate octaprenyltransferase">
    <location>
        <begin position="1"/>
        <end position="287"/>
    </location>
</feature>
<feature type="transmembrane region" description="Helical" evidence="1">
    <location>
        <begin position="30"/>
        <end position="50"/>
    </location>
</feature>
<feature type="transmembrane region" description="Helical" evidence="1">
    <location>
        <begin position="92"/>
        <end position="112"/>
    </location>
</feature>
<feature type="transmembrane region" description="Helical" evidence="1">
    <location>
        <begin position="133"/>
        <end position="153"/>
    </location>
</feature>
<feature type="transmembrane region" description="Helical" evidence="1">
    <location>
        <begin position="158"/>
        <end position="178"/>
    </location>
</feature>
<feature type="transmembrane region" description="Helical" evidence="1">
    <location>
        <begin position="207"/>
        <end position="227"/>
    </location>
</feature>
<feature type="transmembrane region" description="Helical" evidence="1">
    <location>
        <begin position="232"/>
        <end position="252"/>
    </location>
</feature>
<feature type="transmembrane region" description="Helical" evidence="1">
    <location>
        <begin position="266"/>
        <end position="286"/>
    </location>
</feature>